<name>APA_MYCLE</name>
<reference key="1">
    <citation type="journal article" date="1994" name="Infect. Immun.">
        <title>Characterization of a Mycobacterium leprae antigen related to the secreted Mycobacterium tuberculosis protein MPT32.</title>
        <authorList>
            <person name="Wieles B."/>
            <person name="van Agterveld M."/>
            <person name="Janson A."/>
            <person name="Clark-Curtiss J.E."/>
            <person name="Rinke de Wit T.F."/>
            <person name="Harboe M."/>
            <person name="Thole J."/>
        </authorList>
    </citation>
    <scope>NUCLEOTIDE SEQUENCE [GENOMIC DNA]</scope>
</reference>
<reference key="2">
    <citation type="journal article" date="1995" name="Infect. Immun.">
        <title>A Mycobacterium leprae gene encoding a fibronectin binding protein is used for efficient invasion of epithelial cells and Schwann cells.</title>
        <authorList>
            <person name="Schorey J.S."/>
            <person name="Li Q."/>
            <person name="McCourt D.W."/>
            <person name="Bong-Mastek M."/>
            <person name="Clark-Curtiss J.E."/>
            <person name="Ratliff T.L."/>
            <person name="Brown E.J."/>
        </authorList>
    </citation>
    <scope>NUCLEOTIDE SEQUENCE [GENOMIC DNA]</scope>
</reference>
<reference key="3">
    <citation type="journal article" date="2001" name="Nature">
        <title>Massive gene decay in the leprosy bacillus.</title>
        <authorList>
            <person name="Cole S.T."/>
            <person name="Eiglmeier K."/>
            <person name="Parkhill J."/>
            <person name="James K.D."/>
            <person name="Thomson N.R."/>
            <person name="Wheeler P.R."/>
            <person name="Honore N."/>
            <person name="Garnier T."/>
            <person name="Churcher C.M."/>
            <person name="Harris D.E."/>
            <person name="Mungall K.L."/>
            <person name="Basham D."/>
            <person name="Brown D."/>
            <person name="Chillingworth T."/>
            <person name="Connor R."/>
            <person name="Davies R.M."/>
            <person name="Devlin K."/>
            <person name="Duthoy S."/>
            <person name="Feltwell T."/>
            <person name="Fraser A."/>
            <person name="Hamlin N."/>
            <person name="Holroyd S."/>
            <person name="Hornsby T."/>
            <person name="Jagels K."/>
            <person name="Lacroix C."/>
            <person name="Maclean J."/>
            <person name="Moule S."/>
            <person name="Murphy L.D."/>
            <person name="Oliver K."/>
            <person name="Quail M.A."/>
            <person name="Rajandream M.A."/>
            <person name="Rutherford K.M."/>
            <person name="Rutter S."/>
            <person name="Seeger K."/>
            <person name="Simon S."/>
            <person name="Simmonds M."/>
            <person name="Skelton J."/>
            <person name="Squares R."/>
            <person name="Squares S."/>
            <person name="Stevens K."/>
            <person name="Taylor K."/>
            <person name="Whitehead S."/>
            <person name="Woodward J.R."/>
            <person name="Barrell B.G."/>
        </authorList>
    </citation>
    <scope>NUCLEOTIDE SEQUENCE [LARGE SCALE GENOMIC DNA]</scope>
    <source>
        <strain>TN</strain>
    </source>
</reference>
<comment type="subcellular location">
    <subcellularLocation>
        <location>Secreted</location>
    </subcellularLocation>
</comment>
<comment type="similarity">
    <text evidence="3">Belongs to the Apa family.</text>
</comment>
<keyword id="KW-1185">Reference proteome</keyword>
<keyword id="KW-0677">Repeat</keyword>
<keyword id="KW-0964">Secreted</keyword>
<keyword id="KW-0732">Signal</keyword>
<evidence type="ECO:0000255" key="1"/>
<evidence type="ECO:0000256" key="2">
    <source>
        <dbReference type="SAM" id="MobiDB-lite"/>
    </source>
</evidence>
<evidence type="ECO:0000305" key="3"/>
<dbReference type="EMBL" id="X76501">
    <property type="status" value="NOT_ANNOTATED_CDS"/>
    <property type="molecule type" value="Genomic_DNA"/>
</dbReference>
<dbReference type="EMBL" id="AL583924">
    <property type="protein sequence ID" value="CAC31010.1"/>
    <property type="molecule type" value="Genomic_DNA"/>
</dbReference>
<dbReference type="EMBL" id="AL008609">
    <property type="protein sequence ID" value="CAA15433.1"/>
    <property type="molecule type" value="Genomic_DNA"/>
</dbReference>
<dbReference type="PIR" id="B87166">
    <property type="entry name" value="B87166"/>
</dbReference>
<dbReference type="PIR" id="T44744">
    <property type="entry name" value="T44744"/>
</dbReference>
<dbReference type="RefSeq" id="NP_302372.1">
    <property type="nucleotide sequence ID" value="NC_002677.1"/>
</dbReference>
<dbReference type="RefSeq" id="WP_010908692.1">
    <property type="nucleotide sequence ID" value="NC_002677.1"/>
</dbReference>
<dbReference type="SMR" id="P46842"/>
<dbReference type="STRING" id="272631.gene:17575907"/>
<dbReference type="KEGG" id="mle:ML2055"/>
<dbReference type="PATRIC" id="fig|272631.5.peg.3867"/>
<dbReference type="Leproma" id="ML2055"/>
<dbReference type="eggNOG" id="ENOG50346X3">
    <property type="taxonomic scope" value="Bacteria"/>
</dbReference>
<dbReference type="HOGENOM" id="CLU_064064_0_0_11"/>
<dbReference type="OrthoDB" id="4578857at2"/>
<dbReference type="Proteomes" id="UP000000806">
    <property type="component" value="Chromosome"/>
</dbReference>
<dbReference type="GO" id="GO:0005576">
    <property type="term" value="C:extracellular region"/>
    <property type="evidence" value="ECO:0007669"/>
    <property type="project" value="UniProtKB-SubCell"/>
</dbReference>
<dbReference type="GO" id="GO:0050840">
    <property type="term" value="F:extracellular matrix binding"/>
    <property type="evidence" value="ECO:0007669"/>
    <property type="project" value="InterPro"/>
</dbReference>
<dbReference type="InterPro" id="IPR010801">
    <property type="entry name" value="FAP"/>
</dbReference>
<dbReference type="Pfam" id="PF07174">
    <property type="entry name" value="FAP"/>
    <property type="match status" value="1"/>
</dbReference>
<feature type="signal peptide" evidence="1">
    <location>
        <begin position="1"/>
        <end position="39"/>
    </location>
</feature>
<feature type="chain" id="PRO_0000020744" description="Alanine and proline-rich secreted protein Apa">
    <location>
        <begin position="40"/>
        <end position="287"/>
    </location>
</feature>
<feature type="repeat" description="1">
    <location>
        <begin position="76"/>
        <end position="79"/>
    </location>
</feature>
<feature type="repeat" description="2">
    <location>
        <begin position="83"/>
        <end position="86"/>
    </location>
</feature>
<feature type="repeat" description="3">
    <location>
        <begin position="93"/>
        <end position="96"/>
    </location>
</feature>
<feature type="region of interest" description="Disordered" evidence="2">
    <location>
        <begin position="40"/>
        <end position="88"/>
    </location>
</feature>
<feature type="region of interest" description="3 X 4 AA repeats of D-P-N-A">
    <location>
        <begin position="76"/>
        <end position="96"/>
    </location>
</feature>
<feature type="compositionally biased region" description="Low complexity" evidence="2">
    <location>
        <begin position="40"/>
        <end position="56"/>
    </location>
</feature>
<feature type="sequence conflict" description="In Ref. 1; X76501." evidence="3" ref="1">
    <original>LP</original>
    <variation>FR</variation>
    <location>
        <begin position="33"/>
        <end position="34"/>
    </location>
</feature>
<organism>
    <name type="scientific">Mycobacterium leprae (strain TN)</name>
    <dbReference type="NCBI Taxonomy" id="272631"/>
    <lineage>
        <taxon>Bacteria</taxon>
        <taxon>Bacillati</taxon>
        <taxon>Actinomycetota</taxon>
        <taxon>Actinomycetes</taxon>
        <taxon>Mycobacteriales</taxon>
        <taxon>Mycobacteriaceae</taxon>
        <taxon>Mycobacterium</taxon>
    </lineage>
</organism>
<accession>P46842</accession>
<accession>O32905</accession>
<accession>Q9R5V6</accession>
<sequence length="287" mass="29559">MNQVDLDSTHRKGLWAILAIAVVASASAFTMPLPAAANADPAPLPPSTATAAPSPAQEIITPLPGAPVSSEAQPGDPNAPSLDPNAPYPLAVDPNAGRITNAVGGFSFVLPAGWVESEASHLDYGSVLLSKAIEQPPVLGQPTVVATDTRIVLGRLDQKLYASAEADNIKAAVRLGSDMGEFYLPYPGTRINQETIPLHANGIAGSASYYEVKFSDPNKPIGQICTSVVGSPAASTPDVGPSQRWFVVWLGTSNNPVDKGAAKELAESIRSEMAPIPASVSAPAPVG</sequence>
<gene>
    <name type="primary">apa</name>
    <name type="synonym">modD</name>
    <name type="ordered locus">ML2055</name>
    <name type="ORF">MLCB1788.01c</name>
</gene>
<protein>
    <recommendedName>
        <fullName>Alanine and proline-rich secreted protein Apa</fullName>
    </recommendedName>
    <alternativeName>
        <fullName>Antigen 43L</fullName>
    </alternativeName>
    <alternativeName>
        <fullName>FAP-L</fullName>
    </alternativeName>
    <alternativeName>
        <fullName>Fibronectin attachment protein</fullName>
    </alternativeName>
</protein>
<proteinExistence type="inferred from homology"/>